<organism>
    <name type="scientific">Staphylococcus aureus (strain Mu50 / ATCC 700699)</name>
    <dbReference type="NCBI Taxonomy" id="158878"/>
    <lineage>
        <taxon>Bacteria</taxon>
        <taxon>Bacillati</taxon>
        <taxon>Bacillota</taxon>
        <taxon>Bacilli</taxon>
        <taxon>Bacillales</taxon>
        <taxon>Staphylococcaceae</taxon>
        <taxon>Staphylococcus</taxon>
    </lineage>
</organism>
<reference key="1">
    <citation type="journal article" date="2001" name="Lancet">
        <title>Whole genome sequencing of meticillin-resistant Staphylococcus aureus.</title>
        <authorList>
            <person name="Kuroda M."/>
            <person name="Ohta T."/>
            <person name="Uchiyama I."/>
            <person name="Baba T."/>
            <person name="Yuzawa H."/>
            <person name="Kobayashi I."/>
            <person name="Cui L."/>
            <person name="Oguchi A."/>
            <person name="Aoki K."/>
            <person name="Nagai Y."/>
            <person name="Lian J.-Q."/>
            <person name="Ito T."/>
            <person name="Kanamori M."/>
            <person name="Matsumaru H."/>
            <person name="Maruyama A."/>
            <person name="Murakami H."/>
            <person name="Hosoyama A."/>
            <person name="Mizutani-Ui Y."/>
            <person name="Takahashi N.K."/>
            <person name="Sawano T."/>
            <person name="Inoue R."/>
            <person name="Kaito C."/>
            <person name="Sekimizu K."/>
            <person name="Hirakawa H."/>
            <person name="Kuhara S."/>
            <person name="Goto S."/>
            <person name="Yabuzaki J."/>
            <person name="Kanehisa M."/>
            <person name="Yamashita A."/>
            <person name="Oshima K."/>
            <person name="Furuya K."/>
            <person name="Yoshino C."/>
            <person name="Shiba T."/>
            <person name="Hattori M."/>
            <person name="Ogasawara N."/>
            <person name="Hayashi H."/>
            <person name="Hiramatsu K."/>
        </authorList>
    </citation>
    <scope>NUCLEOTIDE SEQUENCE [LARGE SCALE GENOMIC DNA]</scope>
    <source>
        <strain>Mu50 / ATCC 700699</strain>
    </source>
</reference>
<keyword id="KW-0131">Cell cycle</keyword>
<keyword id="KW-0132">Cell division</keyword>
<keyword id="KW-1003">Cell membrane</keyword>
<keyword id="KW-0472">Membrane</keyword>
<proteinExistence type="inferred from homology"/>
<protein>
    <recommendedName>
        <fullName evidence="1">Cell division protein FtsA</fullName>
    </recommendedName>
</protein>
<sequence>MEEHYYVSIDIGSSSVKTIVGEKFHNGINVIGTGQTYTSGIKNGLIDDFDIARQAIKDTIKKASIASGVDIKEVFLKLPIIGTEVYDESNEIDFYEDTEINGSHIEKVLEGIREKNDVQETEVINVFPIRFIVDKENEVSDPKELIARHSLKVEAGVIAIQKSILINMIKCVEACGVDVLDVYSDAYNYGSILTATEKELGACVIDIGEDVTQVAFYERGELVDADSIEMAGRDITDDIAQGLNTSYETAEKVKHQYGHAFYDSASDQDIFTVEQVDSDETVQYTQKDLSDFIEARVEEIFFEVFDVLQDLGLTKVNGGFIVTGGSANLLGVKELLSDMVSEKVRIHTPSQMGIRKPEFSSAISTISSSIAFDELLDYVTINYHDNEETEEDVIDVKDKDNESKLGGFDWFKRKTNKKDTHENEVESTDEEIYQSEDNHQEHKQNHEHVQDKDKDKEESKFKKLMKSLFE</sequence>
<name>FTSA_STAAM</name>
<dbReference type="EMBL" id="BA000017">
    <property type="protein sequence ID" value="BAB57347.1"/>
    <property type="molecule type" value="Genomic_DNA"/>
</dbReference>
<dbReference type="RefSeq" id="WP_000391031.1">
    <property type="nucleotide sequence ID" value="NC_002758.2"/>
</dbReference>
<dbReference type="SMR" id="P63764"/>
<dbReference type="KEGG" id="sav:SAV1185"/>
<dbReference type="HOGENOM" id="CLU_037850_1_0_9"/>
<dbReference type="PhylomeDB" id="P63764"/>
<dbReference type="Proteomes" id="UP000002481">
    <property type="component" value="Chromosome"/>
</dbReference>
<dbReference type="GO" id="GO:0032153">
    <property type="term" value="C:cell division site"/>
    <property type="evidence" value="ECO:0007669"/>
    <property type="project" value="UniProtKB-UniRule"/>
</dbReference>
<dbReference type="GO" id="GO:0009898">
    <property type="term" value="C:cytoplasmic side of plasma membrane"/>
    <property type="evidence" value="ECO:0007669"/>
    <property type="project" value="UniProtKB-UniRule"/>
</dbReference>
<dbReference type="GO" id="GO:0043093">
    <property type="term" value="P:FtsZ-dependent cytokinesis"/>
    <property type="evidence" value="ECO:0007669"/>
    <property type="project" value="UniProtKB-UniRule"/>
</dbReference>
<dbReference type="CDD" id="cd24048">
    <property type="entry name" value="ASKHA_NBD_FtsA"/>
    <property type="match status" value="1"/>
</dbReference>
<dbReference type="FunFam" id="3.30.420.40:FF:000196">
    <property type="entry name" value="Cell division protein FtsA"/>
    <property type="match status" value="1"/>
</dbReference>
<dbReference type="Gene3D" id="3.30.1490.110">
    <property type="match status" value="1"/>
</dbReference>
<dbReference type="Gene3D" id="3.30.420.40">
    <property type="match status" value="2"/>
</dbReference>
<dbReference type="HAMAP" id="MF_02033">
    <property type="entry name" value="FtsA"/>
    <property type="match status" value="1"/>
</dbReference>
<dbReference type="InterPro" id="IPR043129">
    <property type="entry name" value="ATPase_NBD"/>
</dbReference>
<dbReference type="InterPro" id="IPR020823">
    <property type="entry name" value="Cell_div_FtsA"/>
</dbReference>
<dbReference type="InterPro" id="IPR050696">
    <property type="entry name" value="FtsA/MreB"/>
</dbReference>
<dbReference type="InterPro" id="IPR003494">
    <property type="entry name" value="SHS2_FtsA"/>
</dbReference>
<dbReference type="NCBIfam" id="TIGR01174">
    <property type="entry name" value="ftsA"/>
    <property type="match status" value="1"/>
</dbReference>
<dbReference type="PANTHER" id="PTHR32432:SF4">
    <property type="entry name" value="CELL DIVISION PROTEIN FTSA"/>
    <property type="match status" value="1"/>
</dbReference>
<dbReference type="PANTHER" id="PTHR32432">
    <property type="entry name" value="CELL DIVISION PROTEIN FTSA-RELATED"/>
    <property type="match status" value="1"/>
</dbReference>
<dbReference type="Pfam" id="PF14450">
    <property type="entry name" value="FtsA"/>
    <property type="match status" value="1"/>
</dbReference>
<dbReference type="Pfam" id="PF02491">
    <property type="entry name" value="SHS2_FTSA"/>
    <property type="match status" value="1"/>
</dbReference>
<dbReference type="PIRSF" id="PIRSF003101">
    <property type="entry name" value="FtsA"/>
    <property type="match status" value="1"/>
</dbReference>
<dbReference type="SMART" id="SM00842">
    <property type="entry name" value="FtsA"/>
    <property type="match status" value="1"/>
</dbReference>
<dbReference type="SUPFAM" id="SSF53067">
    <property type="entry name" value="Actin-like ATPase domain"/>
    <property type="match status" value="2"/>
</dbReference>
<comment type="function">
    <text evidence="1">Cell division protein that is involved in the assembly of the Z ring. May serve as a membrane anchor for the Z ring.</text>
</comment>
<comment type="subunit">
    <text evidence="1">Self-interacts. Interacts with FtsZ.</text>
</comment>
<comment type="subcellular location">
    <subcellularLocation>
        <location evidence="1">Cell membrane</location>
        <topology evidence="1">Peripheral membrane protein</topology>
        <orientation evidence="1">Cytoplasmic side</orientation>
    </subcellularLocation>
    <text evidence="1">Localizes to the Z ring in an FtsZ-dependent manner. Targeted to the membrane through a conserved C-terminal amphipathic helix.</text>
</comment>
<comment type="similarity">
    <text evidence="1">Belongs to the FtsA/MreB family.</text>
</comment>
<feature type="chain" id="PRO_0000062747" description="Cell division protein FtsA">
    <location>
        <begin position="1"/>
        <end position="470"/>
    </location>
</feature>
<feature type="region of interest" description="Disordered" evidence="2">
    <location>
        <begin position="416"/>
        <end position="470"/>
    </location>
</feature>
<feature type="compositionally biased region" description="Acidic residues" evidence="2">
    <location>
        <begin position="425"/>
        <end position="434"/>
    </location>
</feature>
<feature type="compositionally biased region" description="Basic and acidic residues" evidence="2">
    <location>
        <begin position="436"/>
        <end position="461"/>
    </location>
</feature>
<accession>P63764</accession>
<accession>Q99US9</accession>
<gene>
    <name evidence="1" type="primary">ftsA</name>
    <name type="ordered locus">SAV1185</name>
</gene>
<evidence type="ECO:0000255" key="1">
    <source>
        <dbReference type="HAMAP-Rule" id="MF_02033"/>
    </source>
</evidence>
<evidence type="ECO:0000256" key="2">
    <source>
        <dbReference type="SAM" id="MobiDB-lite"/>
    </source>
</evidence>